<feature type="chain" id="PRO_0000163623" description="1-deoxy-D-xylulose 5-phosphate reductoisomerase">
    <location>
        <begin position="1"/>
        <end position="398"/>
    </location>
</feature>
<feature type="binding site" evidence="1">
    <location>
        <position position="10"/>
    </location>
    <ligand>
        <name>NADPH</name>
        <dbReference type="ChEBI" id="CHEBI:57783"/>
    </ligand>
</feature>
<feature type="binding site" evidence="1">
    <location>
        <position position="11"/>
    </location>
    <ligand>
        <name>NADPH</name>
        <dbReference type="ChEBI" id="CHEBI:57783"/>
    </ligand>
</feature>
<feature type="binding site" evidence="1">
    <location>
        <position position="12"/>
    </location>
    <ligand>
        <name>NADPH</name>
        <dbReference type="ChEBI" id="CHEBI:57783"/>
    </ligand>
</feature>
<feature type="binding site" evidence="1">
    <location>
        <position position="13"/>
    </location>
    <ligand>
        <name>NADPH</name>
        <dbReference type="ChEBI" id="CHEBI:57783"/>
    </ligand>
</feature>
<feature type="binding site" evidence="1">
    <location>
        <position position="37"/>
    </location>
    <ligand>
        <name>NADPH</name>
        <dbReference type="ChEBI" id="CHEBI:57783"/>
    </ligand>
</feature>
<feature type="binding site" evidence="1">
    <location>
        <position position="38"/>
    </location>
    <ligand>
        <name>NADPH</name>
        <dbReference type="ChEBI" id="CHEBI:57783"/>
    </ligand>
</feature>
<feature type="binding site" evidence="1">
    <location>
        <position position="124"/>
    </location>
    <ligand>
        <name>NADPH</name>
        <dbReference type="ChEBI" id="CHEBI:57783"/>
    </ligand>
</feature>
<feature type="binding site" evidence="1">
    <location>
        <position position="125"/>
    </location>
    <ligand>
        <name>1-deoxy-D-xylulose 5-phosphate</name>
        <dbReference type="ChEBI" id="CHEBI:57792"/>
    </ligand>
</feature>
<feature type="binding site" evidence="1">
    <location>
        <position position="126"/>
    </location>
    <ligand>
        <name>NADPH</name>
        <dbReference type="ChEBI" id="CHEBI:57783"/>
    </ligand>
</feature>
<feature type="binding site" evidence="1">
    <location>
        <position position="150"/>
    </location>
    <ligand>
        <name>Mn(2+)</name>
        <dbReference type="ChEBI" id="CHEBI:29035"/>
    </ligand>
</feature>
<feature type="binding site" evidence="1">
    <location>
        <position position="151"/>
    </location>
    <ligand>
        <name>1-deoxy-D-xylulose 5-phosphate</name>
        <dbReference type="ChEBI" id="CHEBI:57792"/>
    </ligand>
</feature>
<feature type="binding site" evidence="1">
    <location>
        <position position="152"/>
    </location>
    <ligand>
        <name>1-deoxy-D-xylulose 5-phosphate</name>
        <dbReference type="ChEBI" id="CHEBI:57792"/>
    </ligand>
</feature>
<feature type="binding site" evidence="1">
    <location>
        <position position="152"/>
    </location>
    <ligand>
        <name>Mn(2+)</name>
        <dbReference type="ChEBI" id="CHEBI:29035"/>
    </ligand>
</feature>
<feature type="binding site" evidence="1">
    <location>
        <position position="186"/>
    </location>
    <ligand>
        <name>1-deoxy-D-xylulose 5-phosphate</name>
        <dbReference type="ChEBI" id="CHEBI:57792"/>
    </ligand>
</feature>
<feature type="binding site" evidence="1">
    <location>
        <position position="209"/>
    </location>
    <ligand>
        <name>1-deoxy-D-xylulose 5-phosphate</name>
        <dbReference type="ChEBI" id="CHEBI:57792"/>
    </ligand>
</feature>
<feature type="binding site" evidence="1">
    <location>
        <position position="215"/>
    </location>
    <ligand>
        <name>NADPH</name>
        <dbReference type="ChEBI" id="CHEBI:57783"/>
    </ligand>
</feature>
<feature type="binding site" evidence="1">
    <location>
        <position position="222"/>
    </location>
    <ligand>
        <name>1-deoxy-D-xylulose 5-phosphate</name>
        <dbReference type="ChEBI" id="CHEBI:57792"/>
    </ligand>
</feature>
<feature type="binding site" evidence="1">
    <location>
        <position position="227"/>
    </location>
    <ligand>
        <name>1-deoxy-D-xylulose 5-phosphate</name>
        <dbReference type="ChEBI" id="CHEBI:57792"/>
    </ligand>
</feature>
<feature type="binding site" evidence="1">
    <location>
        <position position="228"/>
    </location>
    <ligand>
        <name>1-deoxy-D-xylulose 5-phosphate</name>
        <dbReference type="ChEBI" id="CHEBI:57792"/>
    </ligand>
</feature>
<feature type="binding site" evidence="1">
    <location>
        <position position="231"/>
    </location>
    <ligand>
        <name>1-deoxy-D-xylulose 5-phosphate</name>
        <dbReference type="ChEBI" id="CHEBI:57792"/>
    </ligand>
</feature>
<feature type="binding site" evidence="1">
    <location>
        <position position="231"/>
    </location>
    <ligand>
        <name>Mn(2+)</name>
        <dbReference type="ChEBI" id="CHEBI:29035"/>
    </ligand>
</feature>
<gene>
    <name evidence="1" type="primary">dxr</name>
    <name type="ordered locus">BUsg_229</name>
</gene>
<evidence type="ECO:0000255" key="1">
    <source>
        <dbReference type="HAMAP-Rule" id="MF_00183"/>
    </source>
</evidence>
<comment type="function">
    <text evidence="1">Catalyzes the NADPH-dependent rearrangement and reduction of 1-deoxy-D-xylulose-5-phosphate (DXP) to 2-C-methyl-D-erythritol 4-phosphate (MEP).</text>
</comment>
<comment type="catalytic activity">
    <reaction evidence="1">
        <text>2-C-methyl-D-erythritol 4-phosphate + NADP(+) = 1-deoxy-D-xylulose 5-phosphate + NADPH + H(+)</text>
        <dbReference type="Rhea" id="RHEA:13717"/>
        <dbReference type="ChEBI" id="CHEBI:15378"/>
        <dbReference type="ChEBI" id="CHEBI:57783"/>
        <dbReference type="ChEBI" id="CHEBI:57792"/>
        <dbReference type="ChEBI" id="CHEBI:58262"/>
        <dbReference type="ChEBI" id="CHEBI:58349"/>
        <dbReference type="EC" id="1.1.1.267"/>
    </reaction>
    <physiologicalReaction direction="right-to-left" evidence="1">
        <dbReference type="Rhea" id="RHEA:13719"/>
    </physiologicalReaction>
</comment>
<comment type="cofactor">
    <cofactor evidence="1">
        <name>Mg(2+)</name>
        <dbReference type="ChEBI" id="CHEBI:18420"/>
    </cofactor>
    <cofactor evidence="1">
        <name>Mn(2+)</name>
        <dbReference type="ChEBI" id="CHEBI:29035"/>
    </cofactor>
</comment>
<comment type="pathway">
    <text evidence="1">Isoprenoid biosynthesis; isopentenyl diphosphate biosynthesis via DXP pathway; isopentenyl diphosphate from 1-deoxy-D-xylulose 5-phosphate: step 1/6.</text>
</comment>
<comment type="subunit">
    <text evidence="1">Homodimer.</text>
</comment>
<comment type="similarity">
    <text evidence="1">Belongs to the DXR family.</text>
</comment>
<reference key="1">
    <citation type="journal article" date="2002" name="Science">
        <title>50 million years of genomic stasis in endosymbiotic bacteria.</title>
        <authorList>
            <person name="Tamas I."/>
            <person name="Klasson L."/>
            <person name="Canbaeck B."/>
            <person name="Naeslund A.K."/>
            <person name="Eriksson A.-S."/>
            <person name="Wernegreen J.J."/>
            <person name="Sandstroem J.P."/>
            <person name="Moran N.A."/>
            <person name="Andersson S.G.E."/>
        </authorList>
    </citation>
    <scope>NUCLEOTIDE SEQUENCE [LARGE SCALE GENOMIC DNA]</scope>
    <source>
        <strain>Sg</strain>
    </source>
</reference>
<protein>
    <recommendedName>
        <fullName evidence="1">1-deoxy-D-xylulose 5-phosphate reductoisomerase</fullName>
        <shortName evidence="1">DXP reductoisomerase</shortName>
        <ecNumber evidence="1">1.1.1.267</ecNumber>
    </recommendedName>
    <alternativeName>
        <fullName evidence="1">1-deoxyxylulose-5-phosphate reductoisomerase</fullName>
    </alternativeName>
    <alternativeName>
        <fullName evidence="1">2-C-methyl-D-erythritol 4-phosphate synthase</fullName>
    </alternativeName>
</protein>
<keyword id="KW-0414">Isoprene biosynthesis</keyword>
<keyword id="KW-0464">Manganese</keyword>
<keyword id="KW-0479">Metal-binding</keyword>
<keyword id="KW-0521">NADP</keyword>
<keyword id="KW-0560">Oxidoreductase</keyword>
<dbReference type="EC" id="1.1.1.267" evidence="1"/>
<dbReference type="EMBL" id="AE013218">
    <property type="protein sequence ID" value="AAM67788.1"/>
    <property type="molecule type" value="Genomic_DNA"/>
</dbReference>
<dbReference type="RefSeq" id="WP_011053755.1">
    <property type="nucleotide sequence ID" value="NC_004061.1"/>
</dbReference>
<dbReference type="SMR" id="Q8K9S7"/>
<dbReference type="STRING" id="198804.BUsg_229"/>
<dbReference type="GeneID" id="93003695"/>
<dbReference type="KEGG" id="bas:BUsg_229"/>
<dbReference type="eggNOG" id="COG0743">
    <property type="taxonomic scope" value="Bacteria"/>
</dbReference>
<dbReference type="HOGENOM" id="CLU_035714_0_1_6"/>
<dbReference type="UniPathway" id="UPA00056">
    <property type="reaction ID" value="UER00092"/>
</dbReference>
<dbReference type="Proteomes" id="UP000000416">
    <property type="component" value="Chromosome"/>
</dbReference>
<dbReference type="GO" id="GO:0030604">
    <property type="term" value="F:1-deoxy-D-xylulose-5-phosphate reductoisomerase activity"/>
    <property type="evidence" value="ECO:0007669"/>
    <property type="project" value="UniProtKB-UniRule"/>
</dbReference>
<dbReference type="GO" id="GO:0030145">
    <property type="term" value="F:manganese ion binding"/>
    <property type="evidence" value="ECO:0007669"/>
    <property type="project" value="TreeGrafter"/>
</dbReference>
<dbReference type="GO" id="GO:0070402">
    <property type="term" value="F:NADPH binding"/>
    <property type="evidence" value="ECO:0007669"/>
    <property type="project" value="InterPro"/>
</dbReference>
<dbReference type="GO" id="GO:0051484">
    <property type="term" value="P:isopentenyl diphosphate biosynthetic process, methylerythritol 4-phosphate pathway involved in terpenoid biosynthetic process"/>
    <property type="evidence" value="ECO:0007669"/>
    <property type="project" value="TreeGrafter"/>
</dbReference>
<dbReference type="FunFam" id="3.40.50.720:FF:000045">
    <property type="entry name" value="1-deoxy-D-xylulose 5-phosphate reductoisomerase"/>
    <property type="match status" value="1"/>
</dbReference>
<dbReference type="Gene3D" id="1.10.1740.10">
    <property type="match status" value="1"/>
</dbReference>
<dbReference type="Gene3D" id="3.40.50.720">
    <property type="entry name" value="NAD(P)-binding Rossmann-like Domain"/>
    <property type="match status" value="1"/>
</dbReference>
<dbReference type="HAMAP" id="MF_00183">
    <property type="entry name" value="DXP_reductoisom"/>
    <property type="match status" value="1"/>
</dbReference>
<dbReference type="InterPro" id="IPR003821">
    <property type="entry name" value="DXP_reductoisomerase"/>
</dbReference>
<dbReference type="InterPro" id="IPR013644">
    <property type="entry name" value="DXP_reductoisomerase_C"/>
</dbReference>
<dbReference type="InterPro" id="IPR013512">
    <property type="entry name" value="DXP_reductoisomerase_N"/>
</dbReference>
<dbReference type="InterPro" id="IPR026877">
    <property type="entry name" value="DXPR_C"/>
</dbReference>
<dbReference type="InterPro" id="IPR036169">
    <property type="entry name" value="DXPR_C_sf"/>
</dbReference>
<dbReference type="InterPro" id="IPR036291">
    <property type="entry name" value="NAD(P)-bd_dom_sf"/>
</dbReference>
<dbReference type="NCBIfam" id="TIGR00243">
    <property type="entry name" value="Dxr"/>
    <property type="match status" value="1"/>
</dbReference>
<dbReference type="NCBIfam" id="NF003938">
    <property type="entry name" value="PRK05447.1-1"/>
    <property type="match status" value="1"/>
</dbReference>
<dbReference type="PANTHER" id="PTHR30525">
    <property type="entry name" value="1-DEOXY-D-XYLULOSE 5-PHOSPHATE REDUCTOISOMERASE"/>
    <property type="match status" value="1"/>
</dbReference>
<dbReference type="PANTHER" id="PTHR30525:SF0">
    <property type="entry name" value="1-DEOXY-D-XYLULOSE 5-PHOSPHATE REDUCTOISOMERASE, CHLOROPLASTIC"/>
    <property type="match status" value="1"/>
</dbReference>
<dbReference type="Pfam" id="PF08436">
    <property type="entry name" value="DXP_redisom_C"/>
    <property type="match status" value="1"/>
</dbReference>
<dbReference type="Pfam" id="PF02670">
    <property type="entry name" value="DXP_reductoisom"/>
    <property type="match status" value="1"/>
</dbReference>
<dbReference type="Pfam" id="PF13288">
    <property type="entry name" value="DXPR_C"/>
    <property type="match status" value="1"/>
</dbReference>
<dbReference type="PIRSF" id="PIRSF006205">
    <property type="entry name" value="Dxp_reductismrs"/>
    <property type="match status" value="1"/>
</dbReference>
<dbReference type="SUPFAM" id="SSF69055">
    <property type="entry name" value="1-deoxy-D-xylulose-5-phosphate reductoisomerase, C-terminal domain"/>
    <property type="match status" value="1"/>
</dbReference>
<dbReference type="SUPFAM" id="SSF55347">
    <property type="entry name" value="Glyceraldehyde-3-phosphate dehydrogenase-like, C-terminal domain"/>
    <property type="match status" value="1"/>
</dbReference>
<dbReference type="SUPFAM" id="SSF51735">
    <property type="entry name" value="NAD(P)-binding Rossmann-fold domains"/>
    <property type="match status" value="1"/>
</dbReference>
<accession>Q8K9S7</accession>
<sequence>MKKITVLGSTGSIGISTLSIVKNNPSLFKVIVLVANKNSSMMLEQCEYFSPDWAIMKNKKSAHILKKRLKDKKIKTQVLSGNKAICQLAALKESDLVISAIVGMAGLLPTLSAINAGKTILLANKESLIVCGIIFMKALSSNKAKIFPIDSEHNAIFQVLPKFVQKNLGKVNLKKNGVKSIILTASGGPFYNFKRENLSFVTPLEACSHPNWSMGRKISIDSATMINKGFEYAEARLLFNASSSEIDILIHPQSIIHSMVEYIDGTILAQLSVPDMKVAISYAMSWPNRISSGAKFLNFNKLSNLSFFKPDFIQFPCLKLAIDAFSQGQAAMTVLNAVNEVTVSAFLDSKISFNKISEINTDILMSSSFSEPVSVEEVLEIDKKTRIKSQKKISSLIF</sequence>
<organism>
    <name type="scientific">Buchnera aphidicola subsp. Schizaphis graminum (strain Sg)</name>
    <dbReference type="NCBI Taxonomy" id="198804"/>
    <lineage>
        <taxon>Bacteria</taxon>
        <taxon>Pseudomonadati</taxon>
        <taxon>Pseudomonadota</taxon>
        <taxon>Gammaproteobacteria</taxon>
        <taxon>Enterobacterales</taxon>
        <taxon>Erwiniaceae</taxon>
        <taxon>Buchnera</taxon>
    </lineage>
</organism>
<name>DXR_BUCAP</name>
<proteinExistence type="inferred from homology"/>